<gene>
    <name evidence="1" type="primary">glmU</name>
    <name type="ordered locus">cauri_0894</name>
</gene>
<organism>
    <name type="scientific">Corynebacterium aurimucosum (strain ATCC 700975 / DSM 44827 / CIP 107346 / CN-1)</name>
    <name type="common">Corynebacterium nigricans</name>
    <dbReference type="NCBI Taxonomy" id="548476"/>
    <lineage>
        <taxon>Bacteria</taxon>
        <taxon>Bacillati</taxon>
        <taxon>Actinomycetota</taxon>
        <taxon>Actinomycetes</taxon>
        <taxon>Mycobacteriales</taxon>
        <taxon>Corynebacteriaceae</taxon>
        <taxon>Corynebacterium</taxon>
    </lineage>
</organism>
<keyword id="KW-0012">Acyltransferase</keyword>
<keyword id="KW-0133">Cell shape</keyword>
<keyword id="KW-0961">Cell wall biogenesis/degradation</keyword>
<keyword id="KW-0963">Cytoplasm</keyword>
<keyword id="KW-0460">Magnesium</keyword>
<keyword id="KW-0479">Metal-binding</keyword>
<keyword id="KW-0511">Multifunctional enzyme</keyword>
<keyword id="KW-0548">Nucleotidyltransferase</keyword>
<keyword id="KW-0573">Peptidoglycan synthesis</keyword>
<keyword id="KW-1185">Reference proteome</keyword>
<keyword id="KW-0677">Repeat</keyword>
<keyword id="KW-0808">Transferase</keyword>
<accession>C3PF87</accession>
<protein>
    <recommendedName>
        <fullName evidence="1">Bifunctional protein GlmU</fullName>
    </recommendedName>
    <domain>
        <recommendedName>
            <fullName evidence="1">UDP-N-acetylglucosamine pyrophosphorylase</fullName>
            <ecNumber evidence="1">2.7.7.23</ecNumber>
        </recommendedName>
        <alternativeName>
            <fullName evidence="1">N-acetylglucosamine-1-phosphate uridyltransferase</fullName>
        </alternativeName>
    </domain>
    <domain>
        <recommendedName>
            <fullName evidence="1">Glucosamine-1-phosphate N-acetyltransferase</fullName>
            <ecNumber evidence="1">2.3.1.157</ecNumber>
        </recommendedName>
    </domain>
</protein>
<reference key="1">
    <citation type="journal article" date="2010" name="BMC Genomics">
        <title>Complete genome sequence and lifestyle of black-pigmented Corynebacterium aurimucosum ATCC 700975 (formerly C. nigricans CN-1) isolated from a vaginal swab of a woman with spontaneous abortion.</title>
        <authorList>
            <person name="Trost E."/>
            <person name="Gotker S."/>
            <person name="Schneider J."/>
            <person name="Schneiker-Bekel S."/>
            <person name="Szczepanowski R."/>
            <person name="Tilker A."/>
            <person name="Viehoever P."/>
            <person name="Arnold W."/>
            <person name="Bekel T."/>
            <person name="Blom J."/>
            <person name="Gartemann K.H."/>
            <person name="Linke B."/>
            <person name="Goesmann A."/>
            <person name="Puhler A."/>
            <person name="Shukla S.K."/>
            <person name="Tauch A."/>
        </authorList>
    </citation>
    <scope>NUCLEOTIDE SEQUENCE [LARGE SCALE GENOMIC DNA]</scope>
    <source>
        <strain>ATCC 700975 / DSM 44827 / CIP 107346 / CN-1</strain>
    </source>
</reference>
<proteinExistence type="inferred from homology"/>
<dbReference type="EC" id="2.7.7.23" evidence="1"/>
<dbReference type="EC" id="2.3.1.157" evidence="1"/>
<dbReference type="EMBL" id="CP001601">
    <property type="protein sequence ID" value="ACP32491.1"/>
    <property type="molecule type" value="Genomic_DNA"/>
</dbReference>
<dbReference type="RefSeq" id="WP_010187466.1">
    <property type="nucleotide sequence ID" value="NC_012590.1"/>
</dbReference>
<dbReference type="SMR" id="C3PF87"/>
<dbReference type="STRING" id="548476.cauri_0894"/>
<dbReference type="GeneID" id="31923518"/>
<dbReference type="KEGG" id="car:cauri_0894"/>
<dbReference type="eggNOG" id="COG1207">
    <property type="taxonomic scope" value="Bacteria"/>
</dbReference>
<dbReference type="HOGENOM" id="CLU_029499_15_2_11"/>
<dbReference type="OrthoDB" id="9775031at2"/>
<dbReference type="UniPathway" id="UPA00113">
    <property type="reaction ID" value="UER00532"/>
</dbReference>
<dbReference type="UniPathway" id="UPA00113">
    <property type="reaction ID" value="UER00533"/>
</dbReference>
<dbReference type="UniPathway" id="UPA00973"/>
<dbReference type="Proteomes" id="UP000002077">
    <property type="component" value="Chromosome"/>
</dbReference>
<dbReference type="GO" id="GO:0005737">
    <property type="term" value="C:cytoplasm"/>
    <property type="evidence" value="ECO:0007669"/>
    <property type="project" value="UniProtKB-SubCell"/>
</dbReference>
<dbReference type="GO" id="GO:0016020">
    <property type="term" value="C:membrane"/>
    <property type="evidence" value="ECO:0007669"/>
    <property type="project" value="GOC"/>
</dbReference>
<dbReference type="GO" id="GO:0019134">
    <property type="term" value="F:glucosamine-1-phosphate N-acetyltransferase activity"/>
    <property type="evidence" value="ECO:0007669"/>
    <property type="project" value="UniProtKB-UniRule"/>
</dbReference>
<dbReference type="GO" id="GO:0000287">
    <property type="term" value="F:magnesium ion binding"/>
    <property type="evidence" value="ECO:0007669"/>
    <property type="project" value="UniProtKB-UniRule"/>
</dbReference>
<dbReference type="GO" id="GO:0003977">
    <property type="term" value="F:UDP-N-acetylglucosamine diphosphorylase activity"/>
    <property type="evidence" value="ECO:0007669"/>
    <property type="project" value="UniProtKB-UniRule"/>
</dbReference>
<dbReference type="GO" id="GO:0000902">
    <property type="term" value="P:cell morphogenesis"/>
    <property type="evidence" value="ECO:0007669"/>
    <property type="project" value="UniProtKB-UniRule"/>
</dbReference>
<dbReference type="GO" id="GO:0071555">
    <property type="term" value="P:cell wall organization"/>
    <property type="evidence" value="ECO:0007669"/>
    <property type="project" value="UniProtKB-KW"/>
</dbReference>
<dbReference type="GO" id="GO:0009245">
    <property type="term" value="P:lipid A biosynthetic process"/>
    <property type="evidence" value="ECO:0007669"/>
    <property type="project" value="UniProtKB-UniRule"/>
</dbReference>
<dbReference type="GO" id="GO:0009252">
    <property type="term" value="P:peptidoglycan biosynthetic process"/>
    <property type="evidence" value="ECO:0007669"/>
    <property type="project" value="UniProtKB-UniRule"/>
</dbReference>
<dbReference type="GO" id="GO:0008360">
    <property type="term" value="P:regulation of cell shape"/>
    <property type="evidence" value="ECO:0007669"/>
    <property type="project" value="UniProtKB-KW"/>
</dbReference>
<dbReference type="GO" id="GO:0006048">
    <property type="term" value="P:UDP-N-acetylglucosamine biosynthetic process"/>
    <property type="evidence" value="ECO:0007669"/>
    <property type="project" value="UniProtKB-UniPathway"/>
</dbReference>
<dbReference type="CDD" id="cd02540">
    <property type="entry name" value="GT2_GlmU_N_bac"/>
    <property type="match status" value="1"/>
</dbReference>
<dbReference type="CDD" id="cd03353">
    <property type="entry name" value="LbH_GlmU_C"/>
    <property type="match status" value="1"/>
</dbReference>
<dbReference type="Gene3D" id="2.160.10.10">
    <property type="entry name" value="Hexapeptide repeat proteins"/>
    <property type="match status" value="1"/>
</dbReference>
<dbReference type="Gene3D" id="3.90.550.10">
    <property type="entry name" value="Spore Coat Polysaccharide Biosynthesis Protein SpsA, Chain A"/>
    <property type="match status" value="1"/>
</dbReference>
<dbReference type="HAMAP" id="MF_01631">
    <property type="entry name" value="GlmU"/>
    <property type="match status" value="1"/>
</dbReference>
<dbReference type="InterPro" id="IPR005882">
    <property type="entry name" value="Bifunctional_GlmU"/>
</dbReference>
<dbReference type="InterPro" id="IPR050065">
    <property type="entry name" value="GlmU-like"/>
</dbReference>
<dbReference type="InterPro" id="IPR038009">
    <property type="entry name" value="GlmU_C_LbH"/>
</dbReference>
<dbReference type="InterPro" id="IPR001451">
    <property type="entry name" value="Hexapep"/>
</dbReference>
<dbReference type="InterPro" id="IPR025877">
    <property type="entry name" value="MobA-like_NTP_Trfase"/>
</dbReference>
<dbReference type="InterPro" id="IPR029044">
    <property type="entry name" value="Nucleotide-diphossugar_trans"/>
</dbReference>
<dbReference type="InterPro" id="IPR011004">
    <property type="entry name" value="Trimer_LpxA-like_sf"/>
</dbReference>
<dbReference type="NCBIfam" id="TIGR01173">
    <property type="entry name" value="glmU"/>
    <property type="match status" value="1"/>
</dbReference>
<dbReference type="NCBIfam" id="NF010932">
    <property type="entry name" value="PRK14352.1"/>
    <property type="match status" value="1"/>
</dbReference>
<dbReference type="PANTHER" id="PTHR43584:SF3">
    <property type="entry name" value="BIFUNCTIONAL PROTEIN GLMU"/>
    <property type="match status" value="1"/>
</dbReference>
<dbReference type="PANTHER" id="PTHR43584">
    <property type="entry name" value="NUCLEOTIDYL TRANSFERASE"/>
    <property type="match status" value="1"/>
</dbReference>
<dbReference type="Pfam" id="PF00132">
    <property type="entry name" value="Hexapep"/>
    <property type="match status" value="1"/>
</dbReference>
<dbReference type="Pfam" id="PF12804">
    <property type="entry name" value="NTP_transf_3"/>
    <property type="match status" value="1"/>
</dbReference>
<dbReference type="SUPFAM" id="SSF53448">
    <property type="entry name" value="Nucleotide-diphospho-sugar transferases"/>
    <property type="match status" value="1"/>
</dbReference>
<dbReference type="SUPFAM" id="SSF51161">
    <property type="entry name" value="Trimeric LpxA-like enzymes"/>
    <property type="match status" value="1"/>
</dbReference>
<name>GLMU_CORA7</name>
<feature type="chain" id="PRO_1000186430" description="Bifunctional protein GlmU">
    <location>
        <begin position="1"/>
        <end position="487"/>
    </location>
</feature>
<feature type="region of interest" description="Pyrophosphorylase" evidence="1">
    <location>
        <begin position="1"/>
        <end position="240"/>
    </location>
</feature>
<feature type="region of interest" description="Linker" evidence="1">
    <location>
        <begin position="241"/>
        <end position="261"/>
    </location>
</feature>
<feature type="region of interest" description="N-acetyltransferase" evidence="1">
    <location>
        <begin position="262"/>
        <end position="487"/>
    </location>
</feature>
<feature type="region of interest" description="Disordered" evidence="2">
    <location>
        <begin position="449"/>
        <end position="487"/>
    </location>
</feature>
<feature type="active site" description="Proton acceptor" evidence="1">
    <location>
        <position position="373"/>
    </location>
</feature>
<feature type="binding site" evidence="1">
    <location>
        <begin position="12"/>
        <end position="15"/>
    </location>
    <ligand>
        <name>UDP-N-acetyl-alpha-D-glucosamine</name>
        <dbReference type="ChEBI" id="CHEBI:57705"/>
    </ligand>
</feature>
<feature type="binding site" evidence="1">
    <location>
        <position position="26"/>
    </location>
    <ligand>
        <name>UDP-N-acetyl-alpha-D-glucosamine</name>
        <dbReference type="ChEBI" id="CHEBI:57705"/>
    </ligand>
</feature>
<feature type="binding site" evidence="1">
    <location>
        <position position="83"/>
    </location>
    <ligand>
        <name>UDP-N-acetyl-alpha-D-glucosamine</name>
        <dbReference type="ChEBI" id="CHEBI:57705"/>
    </ligand>
</feature>
<feature type="binding site" evidence="1">
    <location>
        <begin position="88"/>
        <end position="89"/>
    </location>
    <ligand>
        <name>UDP-N-acetyl-alpha-D-glucosamine</name>
        <dbReference type="ChEBI" id="CHEBI:57705"/>
    </ligand>
</feature>
<feature type="binding site" evidence="1">
    <location>
        <position position="113"/>
    </location>
    <ligand>
        <name>Mg(2+)</name>
        <dbReference type="ChEBI" id="CHEBI:18420"/>
    </ligand>
</feature>
<feature type="binding site" evidence="1">
    <location>
        <position position="150"/>
    </location>
    <ligand>
        <name>UDP-N-acetyl-alpha-D-glucosamine</name>
        <dbReference type="ChEBI" id="CHEBI:57705"/>
    </ligand>
</feature>
<feature type="binding site" evidence="1">
    <location>
        <position position="165"/>
    </location>
    <ligand>
        <name>UDP-N-acetyl-alpha-D-glucosamine</name>
        <dbReference type="ChEBI" id="CHEBI:57705"/>
    </ligand>
</feature>
<feature type="binding site" evidence="1">
    <location>
        <position position="180"/>
    </location>
    <ligand>
        <name>UDP-N-acetyl-alpha-D-glucosamine</name>
        <dbReference type="ChEBI" id="CHEBI:57705"/>
    </ligand>
</feature>
<feature type="binding site" evidence="1">
    <location>
        <position position="238"/>
    </location>
    <ligand>
        <name>Mg(2+)</name>
        <dbReference type="ChEBI" id="CHEBI:18420"/>
    </ligand>
</feature>
<feature type="binding site" evidence="1">
    <location>
        <position position="238"/>
    </location>
    <ligand>
        <name>UDP-N-acetyl-alpha-D-glucosamine</name>
        <dbReference type="ChEBI" id="CHEBI:57705"/>
    </ligand>
</feature>
<feature type="binding site" evidence="1">
    <location>
        <position position="343"/>
    </location>
    <ligand>
        <name>UDP-N-acetyl-alpha-D-glucosamine</name>
        <dbReference type="ChEBI" id="CHEBI:57705"/>
    </ligand>
</feature>
<feature type="binding site" evidence="1">
    <location>
        <position position="361"/>
    </location>
    <ligand>
        <name>UDP-N-acetyl-alpha-D-glucosamine</name>
        <dbReference type="ChEBI" id="CHEBI:57705"/>
    </ligand>
</feature>
<feature type="binding site" evidence="1">
    <location>
        <position position="376"/>
    </location>
    <ligand>
        <name>UDP-N-acetyl-alpha-D-glucosamine</name>
        <dbReference type="ChEBI" id="CHEBI:57705"/>
    </ligand>
</feature>
<feature type="binding site" evidence="1">
    <location>
        <position position="387"/>
    </location>
    <ligand>
        <name>UDP-N-acetyl-alpha-D-glucosamine</name>
        <dbReference type="ChEBI" id="CHEBI:57705"/>
    </ligand>
</feature>
<feature type="binding site" evidence="1">
    <location>
        <position position="390"/>
    </location>
    <ligand>
        <name>acetyl-CoA</name>
        <dbReference type="ChEBI" id="CHEBI:57288"/>
    </ligand>
</feature>
<feature type="binding site" evidence="1">
    <location>
        <begin position="396"/>
        <end position="397"/>
    </location>
    <ligand>
        <name>acetyl-CoA</name>
        <dbReference type="ChEBI" id="CHEBI:57288"/>
    </ligand>
</feature>
<feature type="binding site" evidence="1">
    <location>
        <position position="415"/>
    </location>
    <ligand>
        <name>acetyl-CoA</name>
        <dbReference type="ChEBI" id="CHEBI:57288"/>
    </ligand>
</feature>
<feature type="binding site" evidence="1">
    <location>
        <position position="433"/>
    </location>
    <ligand>
        <name>acetyl-CoA</name>
        <dbReference type="ChEBI" id="CHEBI:57288"/>
    </ligand>
</feature>
<evidence type="ECO:0000255" key="1">
    <source>
        <dbReference type="HAMAP-Rule" id="MF_01631"/>
    </source>
</evidence>
<evidence type="ECO:0000256" key="2">
    <source>
        <dbReference type="SAM" id="MobiDB-lite"/>
    </source>
</evidence>
<sequence length="487" mass="50763">MAEVTNCAAIVLAAGAGTRMKSSTQKTLHEIGGRSLLGHALHAAAGLNPEHLVVVVGHQRDQVSPAVDAISEELDCAVSQAVQEEQNGTGHAVQCGLSALPEFDGTVIVTNGDVPLLRPETLRQLHEAHTGEANAVTVLSMTLEDPTGYGRVLRADDGSVTAIVEQKDASEEQRKVREVNSGVFAFDGAVLRDALTKLNSDNAQGELYITDVLEIAREAGHRVGAHVAADPEELSGVNDRVQLAAAGRLLNRRMVEEAMRGGTTIVDPDTTWIGVNVTIGQDVVIHPNTQLWGATTIADGAEVGPDTTLTNIQVGAGASVVRTHGFDSVIGSNAQIGPFTYIRPGVIVGEEGKLGGFVEAKKTQIGRGTKVPHLTYIGDATVGDYSNIGASSVFVNYDGVNKHHTTIGSHVRTGSDTMFIAPVTVGDGAYSGAGTVIKDDVPPGALAVSGGKQRNIEGWVQKKRPGTPAAEAAGKAQDAKANDQTTN</sequence>
<comment type="function">
    <text evidence="1">Catalyzes the last two sequential reactions in the de novo biosynthetic pathway for UDP-N-acetylglucosamine (UDP-GlcNAc). The C-terminal domain catalyzes the transfer of acetyl group from acetyl coenzyme A to glucosamine-1-phosphate (GlcN-1-P) to produce N-acetylglucosamine-1-phosphate (GlcNAc-1-P), which is converted into UDP-GlcNAc by the transfer of uridine 5-monophosphate (from uridine 5-triphosphate), a reaction catalyzed by the N-terminal domain.</text>
</comment>
<comment type="catalytic activity">
    <reaction evidence="1">
        <text>alpha-D-glucosamine 1-phosphate + acetyl-CoA = N-acetyl-alpha-D-glucosamine 1-phosphate + CoA + H(+)</text>
        <dbReference type="Rhea" id="RHEA:13725"/>
        <dbReference type="ChEBI" id="CHEBI:15378"/>
        <dbReference type="ChEBI" id="CHEBI:57287"/>
        <dbReference type="ChEBI" id="CHEBI:57288"/>
        <dbReference type="ChEBI" id="CHEBI:57776"/>
        <dbReference type="ChEBI" id="CHEBI:58516"/>
        <dbReference type="EC" id="2.3.1.157"/>
    </reaction>
</comment>
<comment type="catalytic activity">
    <reaction evidence="1">
        <text>N-acetyl-alpha-D-glucosamine 1-phosphate + UTP + H(+) = UDP-N-acetyl-alpha-D-glucosamine + diphosphate</text>
        <dbReference type="Rhea" id="RHEA:13509"/>
        <dbReference type="ChEBI" id="CHEBI:15378"/>
        <dbReference type="ChEBI" id="CHEBI:33019"/>
        <dbReference type="ChEBI" id="CHEBI:46398"/>
        <dbReference type="ChEBI" id="CHEBI:57705"/>
        <dbReference type="ChEBI" id="CHEBI:57776"/>
        <dbReference type="EC" id="2.7.7.23"/>
    </reaction>
</comment>
<comment type="cofactor">
    <cofactor evidence="1">
        <name>Mg(2+)</name>
        <dbReference type="ChEBI" id="CHEBI:18420"/>
    </cofactor>
    <text evidence="1">Binds 1 Mg(2+) ion per subunit.</text>
</comment>
<comment type="pathway">
    <text evidence="1">Nucleotide-sugar biosynthesis; UDP-N-acetyl-alpha-D-glucosamine biosynthesis; N-acetyl-alpha-D-glucosamine 1-phosphate from alpha-D-glucosamine 6-phosphate (route II): step 2/2.</text>
</comment>
<comment type="pathway">
    <text evidence="1">Nucleotide-sugar biosynthesis; UDP-N-acetyl-alpha-D-glucosamine biosynthesis; UDP-N-acetyl-alpha-D-glucosamine from N-acetyl-alpha-D-glucosamine 1-phosphate: step 1/1.</text>
</comment>
<comment type="pathway">
    <text evidence="1">Bacterial outer membrane biogenesis; LPS lipid A biosynthesis.</text>
</comment>
<comment type="subunit">
    <text evidence="1">Homotrimer.</text>
</comment>
<comment type="subcellular location">
    <subcellularLocation>
        <location evidence="1">Cytoplasm</location>
    </subcellularLocation>
</comment>
<comment type="similarity">
    <text evidence="1">In the N-terminal section; belongs to the N-acetylglucosamine-1-phosphate uridyltransferase family.</text>
</comment>
<comment type="similarity">
    <text evidence="1">In the C-terminal section; belongs to the transferase hexapeptide repeat family.</text>
</comment>